<reference key="1">
    <citation type="journal article" date="2006" name="Planta">
        <title>Color genes in the orchid Oncidium Gower Ramsey: identification, expression, and potential genetic instability in an interspecific cross.</title>
        <authorList>
            <person name="Hieber A.D."/>
            <person name="Mudalige-Jayawickrama R.G."/>
            <person name="Kuehnle A.R."/>
        </authorList>
    </citation>
    <scope>NUCLEOTIDE SEQUENCE [MRNA]</scope>
    <scope>TISSUE SPECIFICITY</scope>
    <source>
        <strain>cv. Gower Ramsey</strain>
    </source>
</reference>
<sequence>MLCLSLNSSSTSPPKLPLHHSFSRRGIRSWVRSPCVQRKKLGFWSSPKAVLSAVSGAGSEAGKVEEAEEYDAIVIGSGIGGLVAATQLAVKGARVLVLEKYVIPGGSSGFFQRDGFTFDVGSSVMFGFSDKGNLNLITQALEAVDCKLRTIPDPTTVHFHLPDNLSIRVHREYDMFISELVNYFPHEKEGIRRFYNECWKIFNSLNSLELKSLEEPMYLFGQFFRKPVECLTLAFYLPQNAGDIARKFIKDPQLLSFIDAECFIVSTVKALHTPMINASMVLCDRHFGGINYPVGGVGGIAKALANGLVNKGSKLLYKANVTKILLKDGKAVGVKLSNGREFFAKTVISNATRWDTFGKLLKVEDIPQEEKNFKKIYLKAPSFLSIHMGVKAFVLPPDTDCHHFILEDNWGRLELPYGSIFLSIPTVLDPSLAPEGHHIFHIFTTSSIENWEGLSHKEYEEKKELVADEIITRLEKKLFPGLKDSVVLKEVGTPKTHRRFLARDSGTYGPMPRKVPKGLLGMPFNTTAINGLYCVGDSCFPGQGVIAVAFSGVMCAHRVAADLGFEKKAPVLDAALLRLLGWLRTVA</sequence>
<dbReference type="EC" id="5.2.1.13"/>
<dbReference type="EMBL" id="AY973634">
    <property type="protein sequence ID" value="AAX84689.1"/>
    <property type="molecule type" value="mRNA"/>
</dbReference>
<dbReference type="SMR" id="Q52QW2"/>
<dbReference type="UniPathway" id="UPA00803"/>
<dbReference type="GO" id="GO:0031969">
    <property type="term" value="C:chloroplast membrane"/>
    <property type="evidence" value="ECO:0007669"/>
    <property type="project" value="UniProtKB-SubCell"/>
</dbReference>
<dbReference type="GO" id="GO:0046608">
    <property type="term" value="F:carotenoid isomerase activity"/>
    <property type="evidence" value="ECO:0007669"/>
    <property type="project" value="InterPro"/>
</dbReference>
<dbReference type="GO" id="GO:0016491">
    <property type="term" value="F:oxidoreductase activity"/>
    <property type="evidence" value="ECO:0007669"/>
    <property type="project" value="InterPro"/>
</dbReference>
<dbReference type="GO" id="GO:0016117">
    <property type="term" value="P:carotenoid biosynthetic process"/>
    <property type="evidence" value="ECO:0007669"/>
    <property type="project" value="UniProtKB-KW"/>
</dbReference>
<dbReference type="Gene3D" id="3.90.660.50">
    <property type="match status" value="1"/>
</dbReference>
<dbReference type="Gene3D" id="3.50.50.60">
    <property type="entry name" value="FAD/NAD(P)-binding domain"/>
    <property type="match status" value="1"/>
</dbReference>
<dbReference type="InterPro" id="IPR002937">
    <property type="entry name" value="Amino_oxidase"/>
</dbReference>
<dbReference type="InterPro" id="IPR014101">
    <property type="entry name" value="CrtISO"/>
</dbReference>
<dbReference type="InterPro" id="IPR045892">
    <property type="entry name" value="CrtISO-like"/>
</dbReference>
<dbReference type="InterPro" id="IPR036188">
    <property type="entry name" value="FAD/NAD-bd_sf"/>
</dbReference>
<dbReference type="NCBIfam" id="TIGR02730">
    <property type="entry name" value="carot_isom"/>
    <property type="match status" value="1"/>
</dbReference>
<dbReference type="PANTHER" id="PTHR46313">
    <property type="match status" value="1"/>
</dbReference>
<dbReference type="PANTHER" id="PTHR46313:SF3">
    <property type="entry name" value="PROLYCOPENE ISOMERASE, CHLOROPLASTIC"/>
    <property type="match status" value="1"/>
</dbReference>
<dbReference type="Pfam" id="PF01593">
    <property type="entry name" value="Amino_oxidase"/>
    <property type="match status" value="1"/>
</dbReference>
<dbReference type="SUPFAM" id="SSF51905">
    <property type="entry name" value="FAD/NAD(P)-binding domain"/>
    <property type="match status" value="1"/>
</dbReference>
<protein>
    <recommendedName>
        <fullName>Prolycopene isomerase 2, chloroplastic</fullName>
        <shortName>CrtISO2</shortName>
        <ecNumber>5.2.1.13</ecNumber>
    </recommendedName>
    <alternativeName>
        <fullName>Carotenoid isomerase 2</fullName>
    </alternativeName>
    <alternativeName>
        <fullName>OcrtISO24</fullName>
    </alternativeName>
</protein>
<evidence type="ECO:0000250" key="1"/>
<evidence type="ECO:0000255" key="2"/>
<evidence type="ECO:0000269" key="3">
    <source>
    </source>
</evidence>
<evidence type="ECO:0000305" key="4"/>
<name>CRTS2_ONCHC</name>
<comment type="function">
    <text evidence="1">Carotene cis-trans-isomerase that converts 7,9,9'-tri-cis-neurosporene to 9'-cis-neurosporene and 7,9,9',7'-tetra-cis-lycopene (also known as prolycopene) into all-trans-lycopene. Isomerization requires redox-active components, suggesting that isomerization is achieved by a reversible redox reaction acting at specific double bonds. Isomerizes adjacent cis-double bonds at C7 and C9 pairwise into the trans-configuration, but is incapable of isomerizing single cis-double bonds at C9 and C9' (By similarity).</text>
</comment>
<comment type="catalytic activity">
    <reaction>
        <text>7,7',9,9'-tetra-cis-lycopene = all-trans-lycopene</text>
        <dbReference type="Rhea" id="RHEA:30971"/>
        <dbReference type="ChEBI" id="CHEBI:15948"/>
        <dbReference type="ChEBI" id="CHEBI:62466"/>
        <dbReference type="EC" id="5.2.1.13"/>
    </reaction>
</comment>
<comment type="cofactor">
    <cofactor evidence="1">
        <name>NAD(+)</name>
        <dbReference type="ChEBI" id="CHEBI:57540"/>
    </cofactor>
    <cofactor evidence="1">
        <name>NADP(+)</name>
        <dbReference type="ChEBI" id="CHEBI:58349"/>
    </cofactor>
    <cofactor evidence="1">
        <name>FAD</name>
        <dbReference type="ChEBI" id="CHEBI:57692"/>
    </cofactor>
</comment>
<comment type="pathway">
    <text>Carotenoid biosynthesis; lycopene biosynthesis.</text>
</comment>
<comment type="subcellular location">
    <subcellularLocation>
        <location evidence="1">Plastid</location>
        <location evidence="1">Chloroplast membrane</location>
        <topology evidence="1">Peripheral membrane protein</topology>
    </subcellularLocation>
</comment>
<comment type="tissue specificity">
    <text evidence="3">Up-regulated in the flower buds and flower lip tissue, while it is weakly expressed in leaves.</text>
</comment>
<comment type="similarity">
    <text evidence="4">Belongs to the carotenoid/retinoid oxidoreductase family. CrtISO subfamily.</text>
</comment>
<organism>
    <name type="scientific">Oncidium hybrid cultivar</name>
    <name type="common">Orchid</name>
    <dbReference type="NCBI Taxonomy" id="141207"/>
    <lineage>
        <taxon>Eukaryota</taxon>
        <taxon>Viridiplantae</taxon>
        <taxon>Streptophyta</taxon>
        <taxon>Embryophyta</taxon>
        <taxon>Tracheophyta</taxon>
        <taxon>Spermatophyta</taxon>
        <taxon>Magnoliopsida</taxon>
        <taxon>Liliopsida</taxon>
        <taxon>Asparagales</taxon>
        <taxon>Orchidaceae</taxon>
        <taxon>Epidendroideae</taxon>
        <taxon>Cymbidieae</taxon>
        <taxon>Oncidiinae</taxon>
        <taxon>Oncidium</taxon>
    </lineage>
</organism>
<proteinExistence type="evidence at transcript level"/>
<accession>Q52QW2</accession>
<gene>
    <name type="primary">CRTISO2</name>
</gene>
<keyword id="KW-0125">Carotenoid biosynthesis</keyword>
<keyword id="KW-0150">Chloroplast</keyword>
<keyword id="KW-0274">FAD</keyword>
<keyword id="KW-0285">Flavoprotein</keyword>
<keyword id="KW-0413">Isomerase</keyword>
<keyword id="KW-0472">Membrane</keyword>
<keyword id="KW-0520">NAD</keyword>
<keyword id="KW-0521">NADP</keyword>
<keyword id="KW-0934">Plastid</keyword>
<keyword id="KW-0809">Transit peptide</keyword>
<feature type="transit peptide" description="Chloroplast" evidence="2">
    <location>
        <begin position="1"/>
        <end position="50"/>
    </location>
</feature>
<feature type="chain" id="PRO_0000225674" description="Prolycopene isomerase 2, chloroplastic">
    <location>
        <begin position="51"/>
        <end position="587"/>
    </location>
</feature>